<keyword id="KW-0378">Hydrolase</keyword>
<keyword id="KW-0533">Nickel</keyword>
<accession>B7JEP5</accession>
<sequence>MKYDIIGDIHGCLQEFQNLTEKLGYNWSSGLPVHPDQRKLAFVGDITDRGPHSLRMIEIVWELVIHKKVAYYAPGNHCNKLYRFFLGRNVTVAHGLETTVAEYEALPSHKQNMIKEKFITLYEQSPLYHVLDEKRLLVCHAGIRQDYIGRQDKKVQTFVLYGDITGEKHADGSPVRRDWAKEYKGTTWIVYGHTPVKEPRFVNHTVNIDTGAVFGGRLTALRYPEMETVSVPSSLPFVPEKFRPIS</sequence>
<proteinExistence type="inferred from homology"/>
<dbReference type="EC" id="3.6.1.17" evidence="1"/>
<dbReference type="EMBL" id="CP001283">
    <property type="protein sequence ID" value="ACK88464.1"/>
    <property type="molecule type" value="Genomic_DNA"/>
</dbReference>
<dbReference type="RefSeq" id="WP_000872722.1">
    <property type="nucleotide sequence ID" value="NC_011773.1"/>
</dbReference>
<dbReference type="SMR" id="B7JEP5"/>
<dbReference type="KEGG" id="bcu:BCAH820_1286"/>
<dbReference type="HOGENOM" id="CLU_023125_3_0_9"/>
<dbReference type="Proteomes" id="UP000001363">
    <property type="component" value="Chromosome"/>
</dbReference>
<dbReference type="GO" id="GO:0005737">
    <property type="term" value="C:cytoplasm"/>
    <property type="evidence" value="ECO:0007669"/>
    <property type="project" value="TreeGrafter"/>
</dbReference>
<dbReference type="GO" id="GO:0004081">
    <property type="term" value="F:bis(5'-nucleosyl)-tetraphosphatase (asymmetrical) activity"/>
    <property type="evidence" value="ECO:0007669"/>
    <property type="project" value="UniProtKB-UniRule"/>
</dbReference>
<dbReference type="GO" id="GO:0016151">
    <property type="term" value="F:nickel cation binding"/>
    <property type="evidence" value="ECO:0007669"/>
    <property type="project" value="UniProtKB-UniRule"/>
</dbReference>
<dbReference type="GO" id="GO:0016791">
    <property type="term" value="F:phosphatase activity"/>
    <property type="evidence" value="ECO:0007669"/>
    <property type="project" value="TreeGrafter"/>
</dbReference>
<dbReference type="CDD" id="cd07423">
    <property type="entry name" value="MPP_Prp_like"/>
    <property type="match status" value="1"/>
</dbReference>
<dbReference type="Gene3D" id="3.60.21.10">
    <property type="match status" value="1"/>
</dbReference>
<dbReference type="HAMAP" id="MF_01443">
    <property type="entry name" value="PrpE"/>
    <property type="match status" value="1"/>
</dbReference>
<dbReference type="InterPro" id="IPR050126">
    <property type="entry name" value="Ap4A_hydrolase"/>
</dbReference>
<dbReference type="InterPro" id="IPR023937">
    <property type="entry name" value="Bis(5'-nucleosyl)-tetraP_PrpE"/>
</dbReference>
<dbReference type="InterPro" id="IPR004843">
    <property type="entry name" value="Calcineurin-like_PHP_ApaH"/>
</dbReference>
<dbReference type="InterPro" id="IPR029052">
    <property type="entry name" value="Metallo-depent_PP-like"/>
</dbReference>
<dbReference type="InterPro" id="IPR041780">
    <property type="entry name" value="MPP_PrpE-like"/>
</dbReference>
<dbReference type="NCBIfam" id="NF010148">
    <property type="entry name" value="PRK13625.1"/>
    <property type="match status" value="1"/>
</dbReference>
<dbReference type="PANTHER" id="PTHR42850:SF7">
    <property type="entry name" value="BIS(5'-NUCLEOSYL)-TETRAPHOSPHATASE PRPE [ASYMMETRICAL]"/>
    <property type="match status" value="1"/>
</dbReference>
<dbReference type="PANTHER" id="PTHR42850">
    <property type="entry name" value="METALLOPHOSPHOESTERASE"/>
    <property type="match status" value="1"/>
</dbReference>
<dbReference type="Pfam" id="PF00149">
    <property type="entry name" value="Metallophos"/>
    <property type="match status" value="1"/>
</dbReference>
<dbReference type="SUPFAM" id="SSF56300">
    <property type="entry name" value="Metallo-dependent phosphatases"/>
    <property type="match status" value="1"/>
</dbReference>
<gene>
    <name evidence="1" type="primary">prpE</name>
    <name type="ordered locus">BCAH820_1286</name>
</gene>
<name>PRPE_BACC0</name>
<comment type="function">
    <text evidence="1">Asymmetrically hydrolyzes Ap4p to yield AMP and ATP.</text>
</comment>
<comment type="catalytic activity">
    <reaction evidence="1">
        <text>P(1),P(4)-bis(5'-guanosyl) tetraphosphate + H2O = GMP + GTP + 2 H(+)</text>
        <dbReference type="Rhea" id="RHEA:22484"/>
        <dbReference type="ChEBI" id="CHEBI:15377"/>
        <dbReference type="ChEBI" id="CHEBI:15378"/>
        <dbReference type="ChEBI" id="CHEBI:37565"/>
        <dbReference type="ChEBI" id="CHEBI:57553"/>
        <dbReference type="ChEBI" id="CHEBI:58115"/>
        <dbReference type="EC" id="3.6.1.17"/>
    </reaction>
</comment>
<comment type="cofactor">
    <cofactor evidence="1">
        <name>Ni(2+)</name>
        <dbReference type="ChEBI" id="CHEBI:49786"/>
    </cofactor>
</comment>
<comment type="similarity">
    <text evidence="1">Belongs to the PrpE family.</text>
</comment>
<protein>
    <recommendedName>
        <fullName evidence="1">Bis(5'-nucleosyl)-tetraphosphatase PrpE [asymmetrical]</fullName>
        <ecNumber evidence="1">3.6.1.17</ecNumber>
    </recommendedName>
    <alternativeName>
        <fullName evidence="1">Ap4A hydrolase</fullName>
    </alternativeName>
    <alternativeName>
        <fullName evidence="1">Diadenosine 5',5'''-P1,P4-tetraphosphate asymmetrical hydrolase</fullName>
        <shortName evidence="1">Diadenosine tetraphosphatase</shortName>
    </alternativeName>
</protein>
<organism>
    <name type="scientific">Bacillus cereus (strain AH820)</name>
    <dbReference type="NCBI Taxonomy" id="405535"/>
    <lineage>
        <taxon>Bacteria</taxon>
        <taxon>Bacillati</taxon>
        <taxon>Bacillota</taxon>
        <taxon>Bacilli</taxon>
        <taxon>Bacillales</taxon>
        <taxon>Bacillaceae</taxon>
        <taxon>Bacillus</taxon>
        <taxon>Bacillus cereus group</taxon>
    </lineage>
</organism>
<reference key="1">
    <citation type="submission" date="2008-10" db="EMBL/GenBank/DDBJ databases">
        <title>Genome sequence of Bacillus cereus AH820.</title>
        <authorList>
            <person name="Dodson R.J."/>
            <person name="Durkin A.S."/>
            <person name="Rosovitz M.J."/>
            <person name="Rasko D.A."/>
            <person name="Hoffmaster A."/>
            <person name="Ravel J."/>
            <person name="Sutton G."/>
        </authorList>
    </citation>
    <scope>NUCLEOTIDE SEQUENCE [LARGE SCALE GENOMIC DNA]</scope>
    <source>
        <strain>AH820</strain>
    </source>
</reference>
<evidence type="ECO:0000255" key="1">
    <source>
        <dbReference type="HAMAP-Rule" id="MF_01443"/>
    </source>
</evidence>
<feature type="chain" id="PRO_1000145927" description="Bis(5'-nucleosyl)-tetraphosphatase PrpE [asymmetrical]">
    <location>
        <begin position="1"/>
        <end position="246"/>
    </location>
</feature>